<gene>
    <name evidence="1" type="primary">rsgA1</name>
    <name type="ordered locus">lmo1332</name>
</gene>
<protein>
    <recommendedName>
        <fullName evidence="1">Small ribosomal subunit biogenesis GTPase RsgA 1</fullName>
        <ecNumber evidence="1">3.6.1.-</ecNumber>
    </recommendedName>
</protein>
<proteinExistence type="inferred from homology"/>
<accession>Q8Y7F0</accession>
<feature type="chain" id="PRO_0000171492" description="Small ribosomal subunit biogenesis GTPase RsgA 1">
    <location>
        <begin position="1"/>
        <end position="346"/>
    </location>
</feature>
<feature type="domain" description="CP-type G" evidence="2">
    <location>
        <begin position="93"/>
        <end position="248"/>
    </location>
</feature>
<feature type="binding site" evidence="1">
    <location>
        <begin position="138"/>
        <end position="141"/>
    </location>
    <ligand>
        <name>GTP</name>
        <dbReference type="ChEBI" id="CHEBI:37565"/>
    </ligand>
</feature>
<feature type="binding site" evidence="1">
    <location>
        <begin position="190"/>
        <end position="198"/>
    </location>
    <ligand>
        <name>GTP</name>
        <dbReference type="ChEBI" id="CHEBI:37565"/>
    </ligand>
</feature>
<feature type="binding site" evidence="1">
    <location>
        <position position="271"/>
    </location>
    <ligand>
        <name>Zn(2+)</name>
        <dbReference type="ChEBI" id="CHEBI:29105"/>
    </ligand>
</feature>
<feature type="binding site" evidence="1">
    <location>
        <position position="276"/>
    </location>
    <ligand>
        <name>Zn(2+)</name>
        <dbReference type="ChEBI" id="CHEBI:29105"/>
    </ligand>
</feature>
<feature type="binding site" evidence="1">
    <location>
        <position position="278"/>
    </location>
    <ligand>
        <name>Zn(2+)</name>
        <dbReference type="ChEBI" id="CHEBI:29105"/>
    </ligand>
</feature>
<feature type="binding site" evidence="1">
    <location>
        <position position="284"/>
    </location>
    <ligand>
        <name>Zn(2+)</name>
        <dbReference type="ChEBI" id="CHEBI:29105"/>
    </ligand>
</feature>
<reference key="1">
    <citation type="journal article" date="2001" name="Science">
        <title>Comparative genomics of Listeria species.</title>
        <authorList>
            <person name="Glaser P."/>
            <person name="Frangeul L."/>
            <person name="Buchrieser C."/>
            <person name="Rusniok C."/>
            <person name="Amend A."/>
            <person name="Baquero F."/>
            <person name="Berche P."/>
            <person name="Bloecker H."/>
            <person name="Brandt P."/>
            <person name="Chakraborty T."/>
            <person name="Charbit A."/>
            <person name="Chetouani F."/>
            <person name="Couve E."/>
            <person name="de Daruvar A."/>
            <person name="Dehoux P."/>
            <person name="Domann E."/>
            <person name="Dominguez-Bernal G."/>
            <person name="Duchaud E."/>
            <person name="Durant L."/>
            <person name="Dussurget O."/>
            <person name="Entian K.-D."/>
            <person name="Fsihi H."/>
            <person name="Garcia-del Portillo F."/>
            <person name="Garrido P."/>
            <person name="Gautier L."/>
            <person name="Goebel W."/>
            <person name="Gomez-Lopez N."/>
            <person name="Hain T."/>
            <person name="Hauf J."/>
            <person name="Jackson D."/>
            <person name="Jones L.-M."/>
            <person name="Kaerst U."/>
            <person name="Kreft J."/>
            <person name="Kuhn M."/>
            <person name="Kunst F."/>
            <person name="Kurapkat G."/>
            <person name="Madueno E."/>
            <person name="Maitournam A."/>
            <person name="Mata Vicente J."/>
            <person name="Ng E."/>
            <person name="Nedjari H."/>
            <person name="Nordsiek G."/>
            <person name="Novella S."/>
            <person name="de Pablos B."/>
            <person name="Perez-Diaz J.-C."/>
            <person name="Purcell R."/>
            <person name="Remmel B."/>
            <person name="Rose M."/>
            <person name="Schlueter T."/>
            <person name="Simoes N."/>
            <person name="Tierrez A."/>
            <person name="Vazquez-Boland J.-A."/>
            <person name="Voss H."/>
            <person name="Wehland J."/>
            <person name="Cossart P."/>
        </authorList>
    </citation>
    <scope>NUCLEOTIDE SEQUENCE [LARGE SCALE GENOMIC DNA]</scope>
    <source>
        <strain>ATCC BAA-679 / EGD-e</strain>
    </source>
</reference>
<evidence type="ECO:0000255" key="1">
    <source>
        <dbReference type="HAMAP-Rule" id="MF_01820"/>
    </source>
</evidence>
<evidence type="ECO:0000255" key="2">
    <source>
        <dbReference type="PROSITE-ProRule" id="PRU01058"/>
    </source>
</evidence>
<sequence length="346" mass="39107">MILEQYGITSFFKEQKIAATSSYGRVTAVFRDYYRVITENEEFLASLKRGNFYELSSTSLPTVGDFVEISGDLQILSVLERKTVFSRMNKDSAEQLIAANFDYALIVMSLNHDFNLNRLERYLTVAWDSGATPIIILTKADLVEDLSFYAQQLEAVAYGVPAYYVDNLSHHGFEALESDLKPNSTLILLGSSGVGKSSFINSLAGTDLMKTAGIREDDSKGKHTTTHREMHLLSNGWIVIDTPGMREFGVGFNQAGLETTFSDVEELAEGCRFHDCSHTQEPNCAVQAALEDGTLTMQHYENWLKLQREMAYHARKNSPALARQERDRWKVIQKSMRTHFKTRPKK</sequence>
<keyword id="KW-0963">Cytoplasm</keyword>
<keyword id="KW-0342">GTP-binding</keyword>
<keyword id="KW-0378">Hydrolase</keyword>
<keyword id="KW-0479">Metal-binding</keyword>
<keyword id="KW-0547">Nucleotide-binding</keyword>
<keyword id="KW-1185">Reference proteome</keyword>
<keyword id="KW-0690">Ribosome biogenesis</keyword>
<keyword id="KW-0694">RNA-binding</keyword>
<keyword id="KW-0699">rRNA-binding</keyword>
<keyword id="KW-0862">Zinc</keyword>
<dbReference type="EC" id="3.6.1.-" evidence="1"/>
<dbReference type="EMBL" id="AL591978">
    <property type="protein sequence ID" value="CAC99410.1"/>
    <property type="molecule type" value="Genomic_DNA"/>
</dbReference>
<dbReference type="PIR" id="AD1241">
    <property type="entry name" value="AD1241"/>
</dbReference>
<dbReference type="RefSeq" id="NP_464857.1">
    <property type="nucleotide sequence ID" value="NC_003210.1"/>
</dbReference>
<dbReference type="SMR" id="Q8Y7F0"/>
<dbReference type="STRING" id="169963.gene:17593989"/>
<dbReference type="PaxDb" id="169963-lmo1332"/>
<dbReference type="EnsemblBacteria" id="CAC99410">
    <property type="protein sequence ID" value="CAC99410"/>
    <property type="gene ID" value="CAC99410"/>
</dbReference>
<dbReference type="GeneID" id="987715"/>
<dbReference type="KEGG" id="lmo:lmo1332"/>
<dbReference type="PATRIC" id="fig|169963.11.peg.1369"/>
<dbReference type="eggNOG" id="COG1162">
    <property type="taxonomic scope" value="Bacteria"/>
</dbReference>
<dbReference type="HOGENOM" id="CLU_033617_0_1_9"/>
<dbReference type="OrthoDB" id="9809485at2"/>
<dbReference type="PhylomeDB" id="Q8Y7F0"/>
<dbReference type="BioCyc" id="LMON169963:LMO1332-MONOMER"/>
<dbReference type="Proteomes" id="UP000000817">
    <property type="component" value="Chromosome"/>
</dbReference>
<dbReference type="GO" id="GO:0005737">
    <property type="term" value="C:cytoplasm"/>
    <property type="evidence" value="ECO:0007669"/>
    <property type="project" value="UniProtKB-SubCell"/>
</dbReference>
<dbReference type="GO" id="GO:0005525">
    <property type="term" value="F:GTP binding"/>
    <property type="evidence" value="ECO:0007669"/>
    <property type="project" value="UniProtKB-UniRule"/>
</dbReference>
<dbReference type="GO" id="GO:0003924">
    <property type="term" value="F:GTPase activity"/>
    <property type="evidence" value="ECO:0007669"/>
    <property type="project" value="UniProtKB-UniRule"/>
</dbReference>
<dbReference type="GO" id="GO:0046872">
    <property type="term" value="F:metal ion binding"/>
    <property type="evidence" value="ECO:0007669"/>
    <property type="project" value="UniProtKB-KW"/>
</dbReference>
<dbReference type="GO" id="GO:0019843">
    <property type="term" value="F:rRNA binding"/>
    <property type="evidence" value="ECO:0007669"/>
    <property type="project" value="UniProtKB-KW"/>
</dbReference>
<dbReference type="GO" id="GO:0042274">
    <property type="term" value="P:ribosomal small subunit biogenesis"/>
    <property type="evidence" value="ECO:0007669"/>
    <property type="project" value="UniProtKB-UniRule"/>
</dbReference>
<dbReference type="CDD" id="cd01854">
    <property type="entry name" value="YjeQ_EngC"/>
    <property type="match status" value="1"/>
</dbReference>
<dbReference type="Gene3D" id="3.40.50.300">
    <property type="entry name" value="P-loop containing nucleotide triphosphate hydrolases"/>
    <property type="match status" value="1"/>
</dbReference>
<dbReference type="Gene3D" id="1.10.40.50">
    <property type="entry name" value="Probable gtpase engc, domain 3"/>
    <property type="match status" value="1"/>
</dbReference>
<dbReference type="HAMAP" id="MF_01820">
    <property type="entry name" value="GTPase_RsgA"/>
    <property type="match status" value="1"/>
</dbReference>
<dbReference type="InterPro" id="IPR030378">
    <property type="entry name" value="G_CP_dom"/>
</dbReference>
<dbReference type="InterPro" id="IPR027417">
    <property type="entry name" value="P-loop_NTPase"/>
</dbReference>
<dbReference type="InterPro" id="IPR004881">
    <property type="entry name" value="Ribosome_biogen_GTPase_RsgA"/>
</dbReference>
<dbReference type="InterPro" id="IPR010914">
    <property type="entry name" value="RsgA_GTPase_dom"/>
</dbReference>
<dbReference type="NCBIfam" id="TIGR00157">
    <property type="entry name" value="ribosome small subunit-dependent GTPase A"/>
    <property type="match status" value="1"/>
</dbReference>
<dbReference type="PANTHER" id="PTHR32120">
    <property type="entry name" value="SMALL RIBOSOMAL SUBUNIT BIOGENESIS GTPASE RSGA"/>
    <property type="match status" value="1"/>
</dbReference>
<dbReference type="PANTHER" id="PTHR32120:SF10">
    <property type="entry name" value="SMALL RIBOSOMAL SUBUNIT BIOGENESIS GTPASE RSGA"/>
    <property type="match status" value="1"/>
</dbReference>
<dbReference type="Pfam" id="PF03193">
    <property type="entry name" value="RsgA_GTPase"/>
    <property type="match status" value="1"/>
</dbReference>
<dbReference type="SUPFAM" id="SSF52540">
    <property type="entry name" value="P-loop containing nucleoside triphosphate hydrolases"/>
    <property type="match status" value="1"/>
</dbReference>
<dbReference type="PROSITE" id="PS50936">
    <property type="entry name" value="ENGC_GTPASE"/>
    <property type="match status" value="1"/>
</dbReference>
<dbReference type="PROSITE" id="PS51721">
    <property type="entry name" value="G_CP"/>
    <property type="match status" value="1"/>
</dbReference>
<organism>
    <name type="scientific">Listeria monocytogenes serovar 1/2a (strain ATCC BAA-679 / EGD-e)</name>
    <dbReference type="NCBI Taxonomy" id="169963"/>
    <lineage>
        <taxon>Bacteria</taxon>
        <taxon>Bacillati</taxon>
        <taxon>Bacillota</taxon>
        <taxon>Bacilli</taxon>
        <taxon>Bacillales</taxon>
        <taxon>Listeriaceae</taxon>
        <taxon>Listeria</taxon>
    </lineage>
</organism>
<name>RSGA1_LISMO</name>
<comment type="function">
    <text evidence="1">One of several proteins that assist in the late maturation steps of the functional core of the 30S ribosomal subunit. Helps release RbfA from mature subunits. May play a role in the assembly of ribosomal proteins into the subunit. Circularly permuted GTPase that catalyzes slow GTP hydrolysis, GTPase activity is stimulated by the 30S ribosomal subunit.</text>
</comment>
<comment type="cofactor">
    <cofactor evidence="1">
        <name>Zn(2+)</name>
        <dbReference type="ChEBI" id="CHEBI:29105"/>
    </cofactor>
    <text evidence="1">Binds 1 zinc ion per subunit.</text>
</comment>
<comment type="subunit">
    <text evidence="1">Monomer. Associates with 30S ribosomal subunit, binds 16S rRNA.</text>
</comment>
<comment type="subcellular location">
    <subcellularLocation>
        <location evidence="1">Cytoplasm</location>
    </subcellularLocation>
</comment>
<comment type="similarity">
    <text evidence="1">Belongs to the TRAFAC class YlqF/YawG GTPase family. RsgA subfamily.</text>
</comment>